<feature type="chain" id="PRO_0000447747" description="Magnetosome protein MamZ">
    <location>
        <begin position="1"/>
        <end position="644"/>
    </location>
</feature>
<feature type="transmembrane region" description="Helical" evidence="2">
    <location>
        <begin position="22"/>
        <end position="42"/>
    </location>
</feature>
<feature type="transmembrane region" description="Helical" evidence="2">
    <location>
        <begin position="63"/>
        <end position="83"/>
    </location>
</feature>
<feature type="transmembrane region" description="Helical" evidence="2">
    <location>
        <begin position="92"/>
        <end position="112"/>
    </location>
</feature>
<feature type="transmembrane region" description="Helical" evidence="2">
    <location>
        <begin position="113"/>
        <end position="133"/>
    </location>
</feature>
<feature type="transmembrane region" description="Helical" evidence="2">
    <location>
        <begin position="159"/>
        <end position="179"/>
    </location>
</feature>
<feature type="transmembrane region" description="Helical" evidence="2">
    <location>
        <begin position="185"/>
        <end position="205"/>
    </location>
</feature>
<feature type="transmembrane region" description="Helical" evidence="2">
    <location>
        <begin position="254"/>
        <end position="274"/>
    </location>
</feature>
<feature type="transmembrane region" description="Helical" evidence="2">
    <location>
        <begin position="281"/>
        <end position="301"/>
    </location>
</feature>
<feature type="transmembrane region" description="Helical" evidence="2">
    <location>
        <begin position="311"/>
        <end position="331"/>
    </location>
</feature>
<feature type="transmembrane region" description="Helical" evidence="2">
    <location>
        <begin position="337"/>
        <end position="357"/>
    </location>
</feature>
<feature type="transmembrane region" description="Helical" evidence="2">
    <location>
        <begin position="369"/>
        <end position="389"/>
    </location>
</feature>
<feature type="transmembrane region" description="Helical" evidence="2">
    <location>
        <begin position="403"/>
        <end position="423"/>
    </location>
</feature>
<feature type="transmembrane region" description="Helical" evidence="2">
    <location>
        <begin position="440"/>
        <end position="460"/>
    </location>
</feature>
<feature type="transmembrane region" description="Helical" evidence="2">
    <location>
        <begin position="478"/>
        <end position="498"/>
    </location>
</feature>
<feature type="transmembrane region" description="Helical" evidence="2">
    <location>
        <begin position="518"/>
        <end position="538"/>
    </location>
</feature>
<feature type="transmembrane region" description="Helical" evidence="2">
    <location>
        <begin position="553"/>
        <end position="573"/>
    </location>
</feature>
<feature type="transmembrane region" description="Helical" evidence="2">
    <location>
        <begin position="588"/>
        <end position="608"/>
    </location>
</feature>
<feature type="transmembrane region" description="Helical" evidence="2">
    <location>
        <begin position="612"/>
        <end position="629"/>
    </location>
</feature>
<feature type="region of interest" description="Major facilitator domain" evidence="5">
    <location>
        <begin position="1"/>
        <end position="427"/>
    </location>
</feature>
<feature type="region of interest" description="Ferric reductase-like domain" evidence="5">
    <location>
        <begin position="488"/>
        <end position="599"/>
    </location>
</feature>
<proteinExistence type="inferred from homology"/>
<organism>
    <name type="scientific">Paramagnetospirillum magneticum (strain ATCC 700264 / AMB-1)</name>
    <name type="common">Magnetospirillum magneticum</name>
    <dbReference type="NCBI Taxonomy" id="342108"/>
    <lineage>
        <taxon>Bacteria</taxon>
        <taxon>Pseudomonadati</taxon>
        <taxon>Pseudomonadota</taxon>
        <taxon>Alphaproteobacteria</taxon>
        <taxon>Rhodospirillales</taxon>
        <taxon>Magnetospirillaceae</taxon>
        <taxon>Paramagnetospirillum</taxon>
    </lineage>
</organism>
<keyword id="KW-0091">Biomineralization</keyword>
<keyword id="KW-0406">Ion transport</keyword>
<keyword id="KW-0408">Iron</keyword>
<keyword id="KW-0410">Iron transport</keyword>
<keyword id="KW-1281">Magnetosome</keyword>
<keyword id="KW-0472">Membrane</keyword>
<keyword id="KW-0812">Transmembrane</keyword>
<keyword id="KW-1133">Transmembrane helix</keyword>
<keyword id="KW-0813">Transport</keyword>
<name>MAMZ_PARM1</name>
<comment type="function">
    <text evidence="1">Required for correct biomineralization of the magnetosome; probably converts and then transports some form of iron. It is partially functionally redundant with MamH. May function with MamX, MamY amd Mms6.</text>
</comment>
<comment type="subcellular location">
    <subcellularLocation>
        <location evidence="3">Magnetosome membrane</location>
        <topology evidence="2">Multi-pass membrane protein</topology>
    </subcellularLocation>
    <text evidence="3">Tagged protein forms straight lines with a punctate pattern extending along most of the cell associated with its inner curvature, in the correct position to be associated with magnetosomes, but longer than the usual chain.</text>
</comment>
<comment type="miscellaneous">
    <text evidence="5">This bacteria makes up to 20 cubo-octahedral magnetosomes of about 45 nm in diameter which contain membrane-bound crystals of magnetite (Fe(3)O(4)).</text>
</comment>
<comment type="similarity">
    <text evidence="5">In the N-terminal section; belongs to the major facilitator superfamily.</text>
</comment>
<protein>
    <recommendedName>
        <fullName evidence="5">Magnetosome protein MamZ</fullName>
    </recommendedName>
    <alternativeName>
        <fullName>Probable magnetosome permease MamZ</fullName>
    </alternativeName>
</protein>
<evidence type="ECO:0000250" key="1">
    <source>
        <dbReference type="UniProtKB" id="V6F4W4"/>
    </source>
</evidence>
<evidence type="ECO:0000255" key="2"/>
<evidence type="ECO:0000269" key="3">
    <source>
    </source>
</evidence>
<evidence type="ECO:0000303" key="4">
    <source>
    </source>
</evidence>
<evidence type="ECO:0000305" key="5"/>
<dbReference type="EMBL" id="AP007255">
    <property type="protein sequence ID" value="BAE49820.1"/>
    <property type="molecule type" value="Genomic_DNA"/>
</dbReference>
<dbReference type="RefSeq" id="WP_008615077.1">
    <property type="nucleotide sequence ID" value="NC_007626.1"/>
</dbReference>
<dbReference type="SMR" id="Q2W8K5"/>
<dbReference type="STRING" id="342108.amb1016"/>
<dbReference type="TCDB" id="2.A.1.43.2">
    <property type="family name" value="the major facilitator superfamily (mfs)"/>
</dbReference>
<dbReference type="KEGG" id="mag:amb1016"/>
<dbReference type="HOGENOM" id="CLU_426294_0_0_5"/>
<dbReference type="OrthoDB" id="9788328at2"/>
<dbReference type="Proteomes" id="UP000007058">
    <property type="component" value="Chromosome"/>
</dbReference>
<dbReference type="GO" id="GO:0110146">
    <property type="term" value="C:magnetosome membrane"/>
    <property type="evidence" value="ECO:0000314"/>
    <property type="project" value="UniProtKB"/>
</dbReference>
<dbReference type="GO" id="GO:0005886">
    <property type="term" value="C:plasma membrane"/>
    <property type="evidence" value="ECO:0007669"/>
    <property type="project" value="UniProtKB-UniRule"/>
</dbReference>
<dbReference type="GO" id="GO:0009055">
    <property type="term" value="F:electron transfer activity"/>
    <property type="evidence" value="ECO:0007669"/>
    <property type="project" value="UniProtKB-UniRule"/>
</dbReference>
<dbReference type="GO" id="GO:0010181">
    <property type="term" value="F:FMN binding"/>
    <property type="evidence" value="ECO:0007669"/>
    <property type="project" value="UniProtKB-UniRule"/>
</dbReference>
<dbReference type="GO" id="GO:0020037">
    <property type="term" value="F:heme binding"/>
    <property type="evidence" value="ECO:0007669"/>
    <property type="project" value="UniProtKB-UniRule"/>
</dbReference>
<dbReference type="GO" id="GO:0016679">
    <property type="term" value="F:oxidoreductase activity, acting on diphenols and related substances as donors"/>
    <property type="evidence" value="ECO:0007669"/>
    <property type="project" value="TreeGrafter"/>
</dbReference>
<dbReference type="GO" id="GO:0022857">
    <property type="term" value="F:transmembrane transporter activity"/>
    <property type="evidence" value="ECO:0007669"/>
    <property type="project" value="InterPro"/>
</dbReference>
<dbReference type="GO" id="GO:0006826">
    <property type="term" value="P:iron ion transport"/>
    <property type="evidence" value="ECO:0007669"/>
    <property type="project" value="UniProtKB-KW"/>
</dbReference>
<dbReference type="GO" id="GO:0030091">
    <property type="term" value="P:protein repair"/>
    <property type="evidence" value="ECO:0007669"/>
    <property type="project" value="UniProtKB-UniRule"/>
</dbReference>
<dbReference type="Gene3D" id="1.20.1250.20">
    <property type="entry name" value="MFS general substrate transporter like domains"/>
    <property type="match status" value="1"/>
</dbReference>
<dbReference type="HAMAP" id="MF_01207">
    <property type="entry name" value="MsrQ"/>
    <property type="match status" value="1"/>
</dbReference>
<dbReference type="InterPro" id="IPR013130">
    <property type="entry name" value="Fe3_Rdtase_TM_dom"/>
</dbReference>
<dbReference type="InterPro" id="IPR011701">
    <property type="entry name" value="MFS"/>
</dbReference>
<dbReference type="InterPro" id="IPR020846">
    <property type="entry name" value="MFS_dom"/>
</dbReference>
<dbReference type="InterPro" id="IPR036259">
    <property type="entry name" value="MFS_trans_sf"/>
</dbReference>
<dbReference type="InterPro" id="IPR022837">
    <property type="entry name" value="MsrQ-like"/>
</dbReference>
<dbReference type="NCBIfam" id="NF040986">
    <property type="entry name" value="MamH"/>
    <property type="match status" value="1"/>
</dbReference>
<dbReference type="NCBIfam" id="NF040998">
    <property type="entry name" value="MamZ"/>
    <property type="match status" value="1"/>
</dbReference>
<dbReference type="PANTHER" id="PTHR36964">
    <property type="entry name" value="PROTEIN-METHIONINE-SULFOXIDE REDUCTASE HEME-BINDING SUBUNIT MSRQ"/>
    <property type="match status" value="1"/>
</dbReference>
<dbReference type="PANTHER" id="PTHR36964:SF1">
    <property type="entry name" value="PROTEIN-METHIONINE-SULFOXIDE REDUCTASE HEME-BINDING SUBUNIT MSRQ"/>
    <property type="match status" value="1"/>
</dbReference>
<dbReference type="Pfam" id="PF01794">
    <property type="entry name" value="Ferric_reduct"/>
    <property type="match status" value="1"/>
</dbReference>
<dbReference type="Pfam" id="PF07690">
    <property type="entry name" value="MFS_1"/>
    <property type="match status" value="1"/>
</dbReference>
<dbReference type="SUPFAM" id="SSF103473">
    <property type="entry name" value="MFS general substrate transporter"/>
    <property type="match status" value="1"/>
</dbReference>
<dbReference type="PROSITE" id="PS50850">
    <property type="entry name" value="MFS"/>
    <property type="match status" value="1"/>
</dbReference>
<gene>
    <name evidence="4" type="primary">mamZ</name>
    <name type="ordered locus">amb1016</name>
</gene>
<sequence>MPRNAEAPAKGTTADDFAPTQWNIIYLLMTVGALMAALSISIQPLLLDKIFGIAFEKEGAVNADIQVVAEIVSIVCVGWFGLLSDRIGRVRIIALGFLIAVVGAAVSLLSLQVGLAFGAAGLVLFYLTRVLLTVGADTVQLQLSTLVGDVSSRANRPRLMGNLVFMMVFGGTMLAAIVMQMADYPGGVFLIMCLPLLAGIAGFQLTRRNLRDVAPPQPASEDDEHPLRQVWTVITSDPRMQLAFAAAFYTRADVIILSLFFSLWCISVSDLVGVTRTFATAHAAVMIGLLGLAVLAAVPLWRSFIERHSRISAIGASLSLAALGYIWLGMFANPFNWLVALPLLMVGIGHAGCFVTLQVLTVDASPKPILGAMVGAGYLVGGLGTVMLVQSGGYYFDALGPRAPFILMGTGKMLVTLYAAWLLANGIDETCDHHLKSARTVDWKPLVFLTAALPFVWLVGRSVIEGYISNGSLGEAPVGFVNRYLGDWAFTFLIISLAMRPVQEITGIKTLAKYRRMIGLFAFFYAVMHVLAYVALEWALNLGDMMGDIYKRPFILLGLVAFALLIPLAFTSANSQIKRIGGKRWKKLHSATYVINALVALHFILAANHENGEPYVYAAAVIVLLWYRFHQWRGGNVLRALRIG</sequence>
<accession>Q2W8K5</accession>
<reference key="1">
    <citation type="journal article" date="2005" name="DNA Res.">
        <title>Complete genome sequence of the facultative anaerobic magnetotactic bacterium Magnetospirillum sp. strain AMB-1.</title>
        <authorList>
            <person name="Matsunaga T."/>
            <person name="Okamura Y."/>
            <person name="Fukuda Y."/>
            <person name="Wahyudi A.T."/>
            <person name="Murase Y."/>
            <person name="Takeyama H."/>
        </authorList>
    </citation>
    <scope>NUCLEOTIDE SEQUENCE [LARGE SCALE GENOMIC DNA]</scope>
    <source>
        <strain>ATCC 700264 / AMB-1</strain>
    </source>
</reference>
<reference key="2">
    <citation type="journal article" date="2016" name="J. Bacteriol.">
        <title>Comparative subcellular localization analysis of magnetosome proteins reveals a unique localization behavior of Mms6 protein onto magnetite crystals.</title>
        <authorList>
            <person name="Arakaki A."/>
            <person name="Kikuchi D."/>
            <person name="Tanaka M."/>
            <person name="Yamagishi A."/>
            <person name="Yoda T."/>
            <person name="Matsunaga T."/>
        </authorList>
    </citation>
    <scope>SUBCELLULAR LOCATION</scope>
    <source>
        <strain>ATCC 700264 / AMB-1</strain>
    </source>
</reference>